<reference key="1">
    <citation type="journal article" date="2001" name="Science">
        <title>Mechanisms of evolution in Rickettsia conorii and R. prowazekii.</title>
        <authorList>
            <person name="Ogata H."/>
            <person name="Audic S."/>
            <person name="Renesto-Audiffren P."/>
            <person name="Fournier P.-E."/>
            <person name="Barbe V."/>
            <person name="Samson D."/>
            <person name="Roux V."/>
            <person name="Cossart P."/>
            <person name="Weissenbach J."/>
            <person name="Claverie J.-M."/>
            <person name="Raoult D."/>
        </authorList>
    </citation>
    <scope>NUCLEOTIDE SEQUENCE [LARGE SCALE GENOMIC DNA]</scope>
    <source>
        <strain>ATCC VR-613 / Malish 7</strain>
    </source>
</reference>
<feature type="chain" id="PRO_0000284426" description="Putative uncharacterized protein RC0840">
    <location>
        <begin position="1"/>
        <end position="52"/>
    </location>
</feature>
<name>Y840_RICCN</name>
<dbReference type="EMBL" id="AE006914">
    <property type="protein sequence ID" value="AAL03378.1"/>
    <property type="molecule type" value="Genomic_DNA"/>
</dbReference>
<dbReference type="PIR" id="H97804">
    <property type="entry name" value="H97804"/>
</dbReference>
<dbReference type="SMR" id="Q92HD1"/>
<dbReference type="KEGG" id="rco:RC0840"/>
<dbReference type="HOGENOM" id="CLU_3084251_0_0_5"/>
<dbReference type="Proteomes" id="UP000000816">
    <property type="component" value="Chromosome"/>
</dbReference>
<evidence type="ECO:0000305" key="1"/>
<proteinExistence type="uncertain"/>
<accession>Q92HD1</accession>
<gene>
    <name type="ordered locus">RC0840</name>
</gene>
<organism>
    <name type="scientific">Rickettsia conorii (strain ATCC VR-613 / Malish 7)</name>
    <dbReference type="NCBI Taxonomy" id="272944"/>
    <lineage>
        <taxon>Bacteria</taxon>
        <taxon>Pseudomonadati</taxon>
        <taxon>Pseudomonadota</taxon>
        <taxon>Alphaproteobacteria</taxon>
        <taxon>Rickettsiales</taxon>
        <taxon>Rickettsiaceae</taxon>
        <taxon>Rickettsieae</taxon>
        <taxon>Rickettsia</taxon>
        <taxon>spotted fever group</taxon>
    </lineage>
</organism>
<protein>
    <recommendedName>
        <fullName>Putative uncharacterized protein RC0840</fullName>
    </recommendedName>
</protein>
<sequence>MIEKQLIGRKGDGGFYRLSVSNGKKIKEVININDLSYSPVQKVDILILMRFL</sequence>
<comment type="caution">
    <text evidence="1">Could be the product of a pseudogene. It corresponds to positions 278 to 323 of the complete orthologous and probably active protein in R.felis (RF_0890).</text>
</comment>